<name>JMJCF_DICDI</name>
<keyword id="KW-1185">Reference proteome</keyword>
<organism>
    <name type="scientific">Dictyostelium discoideum</name>
    <name type="common">Social amoeba</name>
    <dbReference type="NCBI Taxonomy" id="44689"/>
    <lineage>
        <taxon>Eukaryota</taxon>
        <taxon>Amoebozoa</taxon>
        <taxon>Evosea</taxon>
        <taxon>Eumycetozoa</taxon>
        <taxon>Dictyostelia</taxon>
        <taxon>Dictyosteliales</taxon>
        <taxon>Dictyosteliaceae</taxon>
        <taxon>Dictyostelium</taxon>
    </lineage>
</organism>
<accession>Q54FG7</accession>
<dbReference type="EMBL" id="AAFI02000171">
    <property type="protein sequence ID" value="EAL61999.1"/>
    <property type="molecule type" value="Genomic_DNA"/>
</dbReference>
<dbReference type="RefSeq" id="XP_635504.1">
    <property type="nucleotide sequence ID" value="XM_630412.1"/>
</dbReference>
<dbReference type="SMR" id="Q54FG7"/>
<dbReference type="PaxDb" id="44689-DDB0238365"/>
<dbReference type="EnsemblProtists" id="EAL61999">
    <property type="protein sequence ID" value="EAL61999"/>
    <property type="gene ID" value="DDB_G0290869"/>
</dbReference>
<dbReference type="GeneID" id="8627871"/>
<dbReference type="KEGG" id="ddi:DDB_G0290869"/>
<dbReference type="dictyBase" id="DDB_G0290869">
    <property type="gene designation" value="jcdF"/>
</dbReference>
<dbReference type="VEuPathDB" id="AmoebaDB:DDB_G0290869"/>
<dbReference type="eggNOG" id="KOG2132">
    <property type="taxonomic scope" value="Eukaryota"/>
</dbReference>
<dbReference type="HOGENOM" id="CLU_576754_0_0_1"/>
<dbReference type="InParanoid" id="Q54FG7"/>
<dbReference type="OMA" id="PLHYDSY"/>
<dbReference type="PhylomeDB" id="Q54FG7"/>
<dbReference type="PRO" id="PR:Q54FG7"/>
<dbReference type="Proteomes" id="UP000002195">
    <property type="component" value="Chromosome 5"/>
</dbReference>
<dbReference type="GO" id="GO:0016706">
    <property type="term" value="F:2-oxoglutarate-dependent dioxygenase activity"/>
    <property type="evidence" value="ECO:0000318"/>
    <property type="project" value="GO_Central"/>
</dbReference>
<dbReference type="Gene3D" id="2.60.120.650">
    <property type="entry name" value="Cupin"/>
    <property type="match status" value="1"/>
</dbReference>
<dbReference type="InterPro" id="IPR041667">
    <property type="entry name" value="Cupin_8"/>
</dbReference>
<dbReference type="InterPro" id="IPR003347">
    <property type="entry name" value="JmjC_dom"/>
</dbReference>
<dbReference type="PANTHER" id="PTHR12461">
    <property type="entry name" value="HYPOXIA-INDUCIBLE FACTOR 1 ALPHA INHIBITOR-RELATED"/>
    <property type="match status" value="1"/>
</dbReference>
<dbReference type="PANTHER" id="PTHR12461:SF21">
    <property type="entry name" value="JMJC DOMAIN-CONTAINING PROTEIN F"/>
    <property type="match status" value="1"/>
</dbReference>
<dbReference type="Pfam" id="PF13621">
    <property type="entry name" value="Cupin_8"/>
    <property type="match status" value="1"/>
</dbReference>
<dbReference type="SMART" id="SM00558">
    <property type="entry name" value="JmjC"/>
    <property type="match status" value="1"/>
</dbReference>
<dbReference type="SUPFAM" id="SSF51197">
    <property type="entry name" value="Clavaminate synthase-like"/>
    <property type="match status" value="1"/>
</dbReference>
<dbReference type="PROSITE" id="PS51184">
    <property type="entry name" value="JMJC"/>
    <property type="match status" value="1"/>
</dbReference>
<evidence type="ECO:0000255" key="1">
    <source>
        <dbReference type="PROSITE-ProRule" id="PRU00538"/>
    </source>
</evidence>
<evidence type="ECO:0000256" key="2">
    <source>
        <dbReference type="SAM" id="MobiDB-lite"/>
    </source>
</evidence>
<proteinExistence type="predicted"/>
<gene>
    <name type="primary">jcdF</name>
    <name type="ORF">DDB_G0290869</name>
</gene>
<protein>
    <recommendedName>
        <fullName>JmjC domain-containing protein F</fullName>
    </recommendedName>
    <alternativeName>
        <fullName>Jumonji domain-containing protein F</fullName>
    </alternativeName>
</protein>
<reference key="1">
    <citation type="journal article" date="2005" name="Nature">
        <title>The genome of the social amoeba Dictyostelium discoideum.</title>
        <authorList>
            <person name="Eichinger L."/>
            <person name="Pachebat J.A."/>
            <person name="Gloeckner G."/>
            <person name="Rajandream M.A."/>
            <person name="Sucgang R."/>
            <person name="Berriman M."/>
            <person name="Song J."/>
            <person name="Olsen R."/>
            <person name="Szafranski K."/>
            <person name="Xu Q."/>
            <person name="Tunggal B."/>
            <person name="Kummerfeld S."/>
            <person name="Madera M."/>
            <person name="Konfortov B.A."/>
            <person name="Rivero F."/>
            <person name="Bankier A.T."/>
            <person name="Lehmann R."/>
            <person name="Hamlin N."/>
            <person name="Davies R."/>
            <person name="Gaudet P."/>
            <person name="Fey P."/>
            <person name="Pilcher K."/>
            <person name="Chen G."/>
            <person name="Saunders D."/>
            <person name="Sodergren E.J."/>
            <person name="Davis P."/>
            <person name="Kerhornou A."/>
            <person name="Nie X."/>
            <person name="Hall N."/>
            <person name="Anjard C."/>
            <person name="Hemphill L."/>
            <person name="Bason N."/>
            <person name="Farbrother P."/>
            <person name="Desany B."/>
            <person name="Just E."/>
            <person name="Morio T."/>
            <person name="Rost R."/>
            <person name="Churcher C.M."/>
            <person name="Cooper J."/>
            <person name="Haydock S."/>
            <person name="van Driessche N."/>
            <person name="Cronin A."/>
            <person name="Goodhead I."/>
            <person name="Muzny D.M."/>
            <person name="Mourier T."/>
            <person name="Pain A."/>
            <person name="Lu M."/>
            <person name="Harper D."/>
            <person name="Lindsay R."/>
            <person name="Hauser H."/>
            <person name="James K.D."/>
            <person name="Quiles M."/>
            <person name="Madan Babu M."/>
            <person name="Saito T."/>
            <person name="Buchrieser C."/>
            <person name="Wardroper A."/>
            <person name="Felder M."/>
            <person name="Thangavelu M."/>
            <person name="Johnson D."/>
            <person name="Knights A."/>
            <person name="Loulseged H."/>
            <person name="Mungall K.L."/>
            <person name="Oliver K."/>
            <person name="Price C."/>
            <person name="Quail M.A."/>
            <person name="Urushihara H."/>
            <person name="Hernandez J."/>
            <person name="Rabbinowitsch E."/>
            <person name="Steffen D."/>
            <person name="Sanders M."/>
            <person name="Ma J."/>
            <person name="Kohara Y."/>
            <person name="Sharp S."/>
            <person name="Simmonds M.N."/>
            <person name="Spiegler S."/>
            <person name="Tivey A."/>
            <person name="Sugano S."/>
            <person name="White B."/>
            <person name="Walker D."/>
            <person name="Woodward J.R."/>
            <person name="Winckler T."/>
            <person name="Tanaka Y."/>
            <person name="Shaulsky G."/>
            <person name="Schleicher M."/>
            <person name="Weinstock G.M."/>
            <person name="Rosenthal A."/>
            <person name="Cox E.C."/>
            <person name="Chisholm R.L."/>
            <person name="Gibbs R.A."/>
            <person name="Loomis W.F."/>
            <person name="Platzer M."/>
            <person name="Kay R.R."/>
            <person name="Williams J.G."/>
            <person name="Dear P.H."/>
            <person name="Noegel A.A."/>
            <person name="Barrell B.G."/>
            <person name="Kuspa A."/>
        </authorList>
    </citation>
    <scope>NUCLEOTIDE SEQUENCE [LARGE SCALE GENOMIC DNA]</scope>
    <source>
        <strain>AX4</strain>
    </source>
</reference>
<feature type="chain" id="PRO_0000330928" description="JmjC domain-containing protein F">
    <location>
        <begin position="1"/>
        <end position="474"/>
    </location>
</feature>
<feature type="domain" description="JmjC" evidence="1">
    <location>
        <begin position="305"/>
        <end position="474"/>
    </location>
</feature>
<feature type="region of interest" description="Disordered" evidence="2">
    <location>
        <begin position="247"/>
        <end position="269"/>
    </location>
</feature>
<feature type="compositionally biased region" description="Low complexity" evidence="2">
    <location>
        <begin position="251"/>
        <end position="261"/>
    </location>
</feature>
<sequence>MNSFKEEYRVPIFNLIKNCYTRTCQDLLSLGNEDANQLSVDLKKLFFMYNKKQFNQLKNIHESIYKLTWNKLLKQGGWEHICLRESFIMGQLAGITYWYTQNDLIKTLEICDQSFIMGAPKELLLPIMDELSKKQTTTTTSTSPTIPMILDENVNFSKFPIIDKNHEIKVIECGKNNGGASGSGGDYLNEFSIFKNQHLNTMTPCIIKGDANNWECINKWKDLNYFLSNHGNRIVPIELGHNKLDSKTKKQQQQQQTTTTTANNDNDNSIDWSEKLMKLKDFIEEYMIPSSKDNDSTATESSKVAYLAQHGLIEQLPSLLDDFKFPLFLQTTGDAKVHETEEEGISPHIWLGTGNTITPLHFDSYDNFLTQIVGYKYVRLYPQNQISNLYLKKDQGDSDDNNLVKNSKTAQNNISFVDFEDTDFEKYPLLKIANQHYTECILGPGDILFMPSGYFHYVRSLSTSLSLSFWFIKK</sequence>